<proteinExistence type="inferred from homology"/>
<sequence length="715" mass="79988">MSDDESMVLNFSTDTAGIQRADKVTGGRWKDRRKLQQRLGGREPVKRRAEGGDKERGDKRAKVDTGNAQEKKNIPKPVSKADVNINSQIVSSLFTSNRAKQTSENKNKHNSDDKVVPSNAPLTDDSFEGLGVGSLVVSHLENKMRIQKSTSIQKVVIPQILQNADKTDFFIHAQTGSGKTLAYLLPIFSAILGMGDHIDRKSGCFALIIAPTRELASQIYHVTTMLANCCHYLVPCLLIGGERKKSEKARLRKGCNFIIGTPGRILDHFQNTKVIKEQMQSSLRYVVLDEGDKLMELGFEETINQIMEIVNSMDVITRKYPKLPNRIVHLLCSATKNNEVAKLSKRSLDNYKVISIGGKKDTMMDNTSVPDQLLQKVVIAPPKLRLITLAGVLDGIQKKPLDAGSVAKRTIVFLSCADSVDYHFEVFSGNDGLYKNLVGDSVRVLSKGNKILPSIKDEELPGIICYKLHGSLSQQMRTMTLKHFATDSEQTKGKHLILFCTDVASRGLDLPDVSTVIEFDPPFAVEDHLHRIGRTARAGRSGEALLFLLPGEEEGYLDYIQKYHPKGWDLLDAEKDVLIKAFNDIDVARNDKEIKSTGKTFEWDTNATTWHLNVERRILENEQFKEQATKGYISHVRAYATHISAEKQYFNLKGVHLGHLAKSFGLRDRPKAMGMNSSKDANGNERSKPKKENAKNKMFRMARMAAKQSADEFNY</sequence>
<feature type="chain" id="PRO_0000232253" description="ATP-dependent RNA helicase DBP7">
    <location>
        <begin position="1"/>
        <end position="715"/>
    </location>
</feature>
<feature type="domain" description="Helicase ATP-binding" evidence="2">
    <location>
        <begin position="160"/>
        <end position="354"/>
    </location>
</feature>
<feature type="domain" description="Helicase C-terminal" evidence="3">
    <location>
        <begin position="400"/>
        <end position="586"/>
    </location>
</feature>
<feature type="region of interest" description="Disordered" evidence="4">
    <location>
        <begin position="1"/>
        <end position="82"/>
    </location>
</feature>
<feature type="region of interest" description="Disordered" evidence="4">
    <location>
        <begin position="94"/>
        <end position="121"/>
    </location>
</feature>
<feature type="region of interest" description="Disordered" evidence="4">
    <location>
        <begin position="668"/>
        <end position="698"/>
    </location>
</feature>
<feature type="short sequence motif" description="Q motif">
    <location>
        <begin position="125"/>
        <end position="154"/>
    </location>
</feature>
<feature type="short sequence motif" description="DEAD box">
    <location>
        <begin position="289"/>
        <end position="292"/>
    </location>
</feature>
<feature type="compositionally biased region" description="Basic and acidic residues" evidence="4">
    <location>
        <begin position="20"/>
        <end position="29"/>
    </location>
</feature>
<feature type="compositionally biased region" description="Basic and acidic residues" evidence="4">
    <location>
        <begin position="40"/>
        <end position="73"/>
    </location>
</feature>
<feature type="compositionally biased region" description="Basic and acidic residues" evidence="4">
    <location>
        <begin position="101"/>
        <end position="115"/>
    </location>
</feature>
<feature type="compositionally biased region" description="Basic and acidic residues" evidence="4">
    <location>
        <begin position="682"/>
        <end position="695"/>
    </location>
</feature>
<feature type="binding site" evidence="2">
    <location>
        <begin position="173"/>
        <end position="180"/>
    </location>
    <ligand>
        <name>ATP</name>
        <dbReference type="ChEBI" id="CHEBI:30616"/>
    </ligand>
</feature>
<comment type="function">
    <text evidence="1">ATP-binding RNA helicase involved in the biogenesis of 60S ribosomal subunits and is required for the normal formation of 25S and 5.8S rRNAs.</text>
</comment>
<comment type="catalytic activity">
    <reaction>
        <text>ATP + H2O = ADP + phosphate + H(+)</text>
        <dbReference type="Rhea" id="RHEA:13065"/>
        <dbReference type="ChEBI" id="CHEBI:15377"/>
        <dbReference type="ChEBI" id="CHEBI:15378"/>
        <dbReference type="ChEBI" id="CHEBI:30616"/>
        <dbReference type="ChEBI" id="CHEBI:43474"/>
        <dbReference type="ChEBI" id="CHEBI:456216"/>
        <dbReference type="EC" id="3.6.4.13"/>
    </reaction>
</comment>
<comment type="subcellular location">
    <subcellularLocation>
        <location evidence="1">Nucleus</location>
        <location evidence="1">Nucleolus</location>
    </subcellularLocation>
</comment>
<comment type="domain">
    <text>The Q motif is unique to and characteristic of the DEAD box family of RNA helicases and controls ATP binding and hydrolysis.</text>
</comment>
<comment type="miscellaneous">
    <text>Present with 1460 molecules/cell in log phase SD medium.</text>
</comment>
<comment type="similarity">
    <text evidence="5">Belongs to the DEAD box helicase family. DDX31/DBP7 subfamily.</text>
</comment>
<evidence type="ECO:0000250" key="1"/>
<evidence type="ECO:0000255" key="2">
    <source>
        <dbReference type="PROSITE-ProRule" id="PRU00541"/>
    </source>
</evidence>
<evidence type="ECO:0000255" key="3">
    <source>
        <dbReference type="PROSITE-ProRule" id="PRU00542"/>
    </source>
</evidence>
<evidence type="ECO:0000256" key="4">
    <source>
        <dbReference type="SAM" id="MobiDB-lite"/>
    </source>
</evidence>
<evidence type="ECO:0000305" key="5"/>
<name>DBP7_CANGA</name>
<keyword id="KW-0067">ATP-binding</keyword>
<keyword id="KW-0347">Helicase</keyword>
<keyword id="KW-0378">Hydrolase</keyword>
<keyword id="KW-0547">Nucleotide-binding</keyword>
<keyword id="KW-0539">Nucleus</keyword>
<keyword id="KW-1185">Reference proteome</keyword>
<keyword id="KW-0690">Ribosome biogenesis</keyword>
<keyword id="KW-0694">RNA-binding</keyword>
<keyword id="KW-0698">rRNA processing</keyword>
<organism>
    <name type="scientific">Candida glabrata (strain ATCC 2001 / BCRC 20586 / JCM 3761 / NBRC 0622 / NRRL Y-65 / CBS 138)</name>
    <name type="common">Yeast</name>
    <name type="synonym">Nakaseomyces glabratus</name>
    <dbReference type="NCBI Taxonomy" id="284593"/>
    <lineage>
        <taxon>Eukaryota</taxon>
        <taxon>Fungi</taxon>
        <taxon>Dikarya</taxon>
        <taxon>Ascomycota</taxon>
        <taxon>Saccharomycotina</taxon>
        <taxon>Saccharomycetes</taxon>
        <taxon>Saccharomycetales</taxon>
        <taxon>Saccharomycetaceae</taxon>
        <taxon>Nakaseomyces</taxon>
    </lineage>
</organism>
<reference key="1">
    <citation type="journal article" date="2002" name="Yeast">
        <title>Genomic differences between Candida glabrata and Saccharomyces cerevisiae around the MRPL28 and GCN3 loci.</title>
        <authorList>
            <person name="Walsh D.W."/>
            <person name="Wolfe K.H."/>
            <person name="Butler G."/>
        </authorList>
    </citation>
    <scope>NUCLEOTIDE SEQUENCE [GENOMIC DNA]</scope>
    <source>
        <strain>ATCC 2001 / BCRC 20586 / JCM 3761 / NBRC 0622 / NRRL Y-65 / CBS 138</strain>
    </source>
</reference>
<reference key="2">
    <citation type="journal article" date="2004" name="Nature">
        <title>Genome evolution in yeasts.</title>
        <authorList>
            <person name="Dujon B."/>
            <person name="Sherman D."/>
            <person name="Fischer G."/>
            <person name="Durrens P."/>
            <person name="Casaregola S."/>
            <person name="Lafontaine I."/>
            <person name="de Montigny J."/>
            <person name="Marck C."/>
            <person name="Neuveglise C."/>
            <person name="Talla E."/>
            <person name="Goffard N."/>
            <person name="Frangeul L."/>
            <person name="Aigle M."/>
            <person name="Anthouard V."/>
            <person name="Babour A."/>
            <person name="Barbe V."/>
            <person name="Barnay S."/>
            <person name="Blanchin S."/>
            <person name="Beckerich J.-M."/>
            <person name="Beyne E."/>
            <person name="Bleykasten C."/>
            <person name="Boisrame A."/>
            <person name="Boyer J."/>
            <person name="Cattolico L."/>
            <person name="Confanioleri F."/>
            <person name="de Daruvar A."/>
            <person name="Despons L."/>
            <person name="Fabre E."/>
            <person name="Fairhead C."/>
            <person name="Ferry-Dumazet H."/>
            <person name="Groppi A."/>
            <person name="Hantraye F."/>
            <person name="Hennequin C."/>
            <person name="Jauniaux N."/>
            <person name="Joyet P."/>
            <person name="Kachouri R."/>
            <person name="Kerrest A."/>
            <person name="Koszul R."/>
            <person name="Lemaire M."/>
            <person name="Lesur I."/>
            <person name="Ma L."/>
            <person name="Muller H."/>
            <person name="Nicaud J.-M."/>
            <person name="Nikolski M."/>
            <person name="Oztas S."/>
            <person name="Ozier-Kalogeropoulos O."/>
            <person name="Pellenz S."/>
            <person name="Potier S."/>
            <person name="Richard G.-F."/>
            <person name="Straub M.-L."/>
            <person name="Suleau A."/>
            <person name="Swennen D."/>
            <person name="Tekaia F."/>
            <person name="Wesolowski-Louvel M."/>
            <person name="Westhof E."/>
            <person name="Wirth B."/>
            <person name="Zeniou-Meyer M."/>
            <person name="Zivanovic Y."/>
            <person name="Bolotin-Fukuhara M."/>
            <person name="Thierry A."/>
            <person name="Bouchier C."/>
            <person name="Caudron B."/>
            <person name="Scarpelli C."/>
            <person name="Gaillardin C."/>
            <person name="Weissenbach J."/>
            <person name="Wincker P."/>
            <person name="Souciet J.-L."/>
        </authorList>
    </citation>
    <scope>NUCLEOTIDE SEQUENCE [LARGE SCALE GENOMIC DNA]</scope>
    <source>
        <strain>ATCC 2001 / BCRC 20586 / JCM 3761 / NBRC 0622 / NRRL Y-65 / CBS 138</strain>
    </source>
</reference>
<protein>
    <recommendedName>
        <fullName>ATP-dependent RNA helicase DBP7</fullName>
        <ecNumber>3.6.4.13</ecNumber>
    </recommendedName>
</protein>
<accession>Q8TFL3</accession>
<accession>Q6FLJ0</accession>
<dbReference type="EC" id="3.6.4.13"/>
<dbReference type="EMBL" id="AY083607">
    <property type="protein sequence ID" value="AAM08097.1"/>
    <property type="molecule type" value="Genomic_DNA"/>
</dbReference>
<dbReference type="EMBL" id="CR380958">
    <property type="protein sequence ID" value="CAG61874.1"/>
    <property type="molecule type" value="Genomic_DNA"/>
</dbReference>
<dbReference type="RefSeq" id="XP_448904.1">
    <property type="nucleotide sequence ID" value="XM_448904.1"/>
</dbReference>
<dbReference type="SMR" id="Q8TFL3"/>
<dbReference type="FunCoup" id="Q8TFL3">
    <property type="interactions" value="854"/>
</dbReference>
<dbReference type="STRING" id="284593.Q8TFL3"/>
<dbReference type="EnsemblFungi" id="CAGL0L03047g-T">
    <property type="protein sequence ID" value="CAGL0L03047g-T-p1"/>
    <property type="gene ID" value="CAGL0L03047g"/>
</dbReference>
<dbReference type="KEGG" id="cgr:2890843"/>
<dbReference type="CGD" id="CAL0135220">
    <property type="gene designation" value="CAGL0L03047g"/>
</dbReference>
<dbReference type="VEuPathDB" id="FungiDB:CAGL0L03047g"/>
<dbReference type="eggNOG" id="KOG0348">
    <property type="taxonomic scope" value="Eukaryota"/>
</dbReference>
<dbReference type="HOGENOM" id="CLU_003041_26_2_1"/>
<dbReference type="InParanoid" id="Q8TFL3"/>
<dbReference type="OMA" id="QMGFERW"/>
<dbReference type="Proteomes" id="UP000002428">
    <property type="component" value="Chromosome L"/>
</dbReference>
<dbReference type="GO" id="GO:0005730">
    <property type="term" value="C:nucleolus"/>
    <property type="evidence" value="ECO:0007669"/>
    <property type="project" value="UniProtKB-SubCell"/>
</dbReference>
<dbReference type="GO" id="GO:0005524">
    <property type="term" value="F:ATP binding"/>
    <property type="evidence" value="ECO:0007669"/>
    <property type="project" value="UniProtKB-KW"/>
</dbReference>
<dbReference type="GO" id="GO:0016887">
    <property type="term" value="F:ATP hydrolysis activity"/>
    <property type="evidence" value="ECO:0007669"/>
    <property type="project" value="RHEA"/>
</dbReference>
<dbReference type="GO" id="GO:0003723">
    <property type="term" value="F:RNA binding"/>
    <property type="evidence" value="ECO:0007669"/>
    <property type="project" value="UniProtKB-KW"/>
</dbReference>
<dbReference type="GO" id="GO:0003724">
    <property type="term" value="F:RNA helicase activity"/>
    <property type="evidence" value="ECO:0007669"/>
    <property type="project" value="UniProtKB-EC"/>
</dbReference>
<dbReference type="GO" id="GO:0000464">
    <property type="term" value="P:endonucleolytic cleavage in ITS1 upstream of 5.8S rRNA from tricistronic rRNA transcript (SSU-rRNA, 5.8S rRNA, LSU-rRNA)"/>
    <property type="evidence" value="ECO:0007669"/>
    <property type="project" value="EnsemblFungi"/>
</dbReference>
<dbReference type="CDD" id="cd17949">
    <property type="entry name" value="DEADc_DDX31"/>
    <property type="match status" value="1"/>
</dbReference>
<dbReference type="CDD" id="cd18787">
    <property type="entry name" value="SF2_C_DEAD"/>
    <property type="match status" value="1"/>
</dbReference>
<dbReference type="FunFam" id="3.40.50.300:FF:002326">
    <property type="entry name" value="ATP-dependent RNA helicase DBP7"/>
    <property type="match status" value="1"/>
</dbReference>
<dbReference type="Gene3D" id="3.40.50.300">
    <property type="entry name" value="P-loop containing nucleotide triphosphate hydrolases"/>
    <property type="match status" value="2"/>
</dbReference>
<dbReference type="InterPro" id="IPR011545">
    <property type="entry name" value="DEAD/DEAH_box_helicase_dom"/>
</dbReference>
<dbReference type="InterPro" id="IPR014001">
    <property type="entry name" value="Helicase_ATP-bd"/>
</dbReference>
<dbReference type="InterPro" id="IPR001650">
    <property type="entry name" value="Helicase_C-like"/>
</dbReference>
<dbReference type="InterPro" id="IPR027417">
    <property type="entry name" value="P-loop_NTPase"/>
</dbReference>
<dbReference type="InterPro" id="IPR025313">
    <property type="entry name" value="SPB4-like_CTE"/>
</dbReference>
<dbReference type="PANTHER" id="PTHR24031">
    <property type="entry name" value="RNA HELICASE"/>
    <property type="match status" value="1"/>
</dbReference>
<dbReference type="Pfam" id="PF13959">
    <property type="entry name" value="CTE_SPB4"/>
    <property type="match status" value="1"/>
</dbReference>
<dbReference type="Pfam" id="PF00270">
    <property type="entry name" value="DEAD"/>
    <property type="match status" value="1"/>
</dbReference>
<dbReference type="Pfam" id="PF00271">
    <property type="entry name" value="Helicase_C"/>
    <property type="match status" value="1"/>
</dbReference>
<dbReference type="SMART" id="SM00487">
    <property type="entry name" value="DEXDc"/>
    <property type="match status" value="1"/>
</dbReference>
<dbReference type="SMART" id="SM01178">
    <property type="entry name" value="DUF4217"/>
    <property type="match status" value="1"/>
</dbReference>
<dbReference type="SMART" id="SM00490">
    <property type="entry name" value="HELICc"/>
    <property type="match status" value="1"/>
</dbReference>
<dbReference type="SUPFAM" id="SSF52540">
    <property type="entry name" value="P-loop containing nucleoside triphosphate hydrolases"/>
    <property type="match status" value="1"/>
</dbReference>
<dbReference type="PROSITE" id="PS51192">
    <property type="entry name" value="HELICASE_ATP_BIND_1"/>
    <property type="match status" value="1"/>
</dbReference>
<dbReference type="PROSITE" id="PS51194">
    <property type="entry name" value="HELICASE_CTER"/>
    <property type="match status" value="1"/>
</dbReference>
<dbReference type="PROSITE" id="PS51195">
    <property type="entry name" value="Q_MOTIF"/>
    <property type="match status" value="1"/>
</dbReference>
<gene>
    <name type="primary">DBP7</name>
    <name type="ordered locus">CAGL0L03047g</name>
</gene>